<feature type="chain" id="PRO_1000196583" description="5'-nucleotidase SurE">
    <location>
        <begin position="1"/>
        <end position="265"/>
    </location>
</feature>
<feature type="binding site" evidence="1">
    <location>
        <position position="8"/>
    </location>
    <ligand>
        <name>a divalent metal cation</name>
        <dbReference type="ChEBI" id="CHEBI:60240"/>
    </ligand>
</feature>
<feature type="binding site" evidence="1">
    <location>
        <position position="9"/>
    </location>
    <ligand>
        <name>a divalent metal cation</name>
        <dbReference type="ChEBI" id="CHEBI:60240"/>
    </ligand>
</feature>
<feature type="binding site" evidence="1">
    <location>
        <position position="41"/>
    </location>
    <ligand>
        <name>a divalent metal cation</name>
        <dbReference type="ChEBI" id="CHEBI:60240"/>
    </ligand>
</feature>
<feature type="binding site" evidence="1">
    <location>
        <position position="100"/>
    </location>
    <ligand>
        <name>a divalent metal cation</name>
        <dbReference type="ChEBI" id="CHEBI:60240"/>
    </ligand>
</feature>
<organism>
    <name type="scientific">Brevibacillus brevis (strain 47 / JCM 6285 / NBRC 100599)</name>
    <dbReference type="NCBI Taxonomy" id="358681"/>
    <lineage>
        <taxon>Bacteria</taxon>
        <taxon>Bacillati</taxon>
        <taxon>Bacillota</taxon>
        <taxon>Bacilli</taxon>
        <taxon>Bacillales</taxon>
        <taxon>Paenibacillaceae</taxon>
        <taxon>Brevibacillus</taxon>
    </lineage>
</organism>
<evidence type="ECO:0000255" key="1">
    <source>
        <dbReference type="HAMAP-Rule" id="MF_00060"/>
    </source>
</evidence>
<accession>C0ZGV3</accession>
<keyword id="KW-0963">Cytoplasm</keyword>
<keyword id="KW-0378">Hydrolase</keyword>
<keyword id="KW-0479">Metal-binding</keyword>
<keyword id="KW-0547">Nucleotide-binding</keyword>
<keyword id="KW-1185">Reference proteome</keyword>
<name>SURE_BREBN</name>
<gene>
    <name evidence="1" type="primary">surE</name>
    <name type="ordered locus">BBR47_40350</name>
</gene>
<sequence length="265" mass="29431">MRILVTNDDGIDALGIKRLVEALLTLEGAEVSIVAPVEEKSGVGHGITYRSALSPEQRDFYGMPVKAWAVNGNPADCVKAAYHLLFEHGKKPDIVFSGINVGTNLGRDIYYSGTCSGAREAVILGVPGVALSYDNWFDQDNYGDVVEMIRPLVKEFSDRAIKGELASEVFWNINIPHVPLAEVKGMVPATLSMNHYEDKYSEEAEGYYLAREYPQVMPLAEPLDYDLLKHGYIAITPVHIDATDRTLLKQMDNWALLKAWGKQEE</sequence>
<reference key="1">
    <citation type="submission" date="2005-03" db="EMBL/GenBank/DDBJ databases">
        <title>Brevibacillus brevis strain 47, complete genome.</title>
        <authorList>
            <person name="Hosoyama A."/>
            <person name="Yamada R."/>
            <person name="Hongo Y."/>
            <person name="Terui Y."/>
            <person name="Ankai A."/>
            <person name="Masuyama W."/>
            <person name="Sekiguchi M."/>
            <person name="Takeda T."/>
            <person name="Asano K."/>
            <person name="Ohji S."/>
            <person name="Ichikawa N."/>
            <person name="Narita S."/>
            <person name="Aoki N."/>
            <person name="Miura H."/>
            <person name="Matsushita S."/>
            <person name="Sekigawa T."/>
            <person name="Yamagata H."/>
            <person name="Yoshikawa H."/>
            <person name="Udaka S."/>
            <person name="Tanikawa S."/>
            <person name="Fujita N."/>
        </authorList>
    </citation>
    <scope>NUCLEOTIDE SEQUENCE [LARGE SCALE GENOMIC DNA]</scope>
    <source>
        <strain>47 / JCM 6285 / NBRC 100599</strain>
    </source>
</reference>
<comment type="function">
    <text evidence="1">Nucleotidase that shows phosphatase activity on nucleoside 5'-monophosphates.</text>
</comment>
<comment type="catalytic activity">
    <reaction evidence="1">
        <text>a ribonucleoside 5'-phosphate + H2O = a ribonucleoside + phosphate</text>
        <dbReference type="Rhea" id="RHEA:12484"/>
        <dbReference type="ChEBI" id="CHEBI:15377"/>
        <dbReference type="ChEBI" id="CHEBI:18254"/>
        <dbReference type="ChEBI" id="CHEBI:43474"/>
        <dbReference type="ChEBI" id="CHEBI:58043"/>
        <dbReference type="EC" id="3.1.3.5"/>
    </reaction>
</comment>
<comment type="cofactor">
    <cofactor evidence="1">
        <name>a divalent metal cation</name>
        <dbReference type="ChEBI" id="CHEBI:60240"/>
    </cofactor>
    <text evidence="1">Binds 1 divalent metal cation per subunit.</text>
</comment>
<comment type="subcellular location">
    <subcellularLocation>
        <location evidence="1">Cytoplasm</location>
    </subcellularLocation>
</comment>
<comment type="similarity">
    <text evidence="1">Belongs to the SurE nucleotidase family.</text>
</comment>
<protein>
    <recommendedName>
        <fullName evidence="1">5'-nucleotidase SurE</fullName>
        <ecNumber evidence="1">3.1.3.5</ecNumber>
    </recommendedName>
    <alternativeName>
        <fullName evidence="1">Nucleoside 5'-monophosphate phosphohydrolase</fullName>
    </alternativeName>
</protein>
<dbReference type="EC" id="3.1.3.5" evidence="1"/>
<dbReference type="EMBL" id="AP008955">
    <property type="protein sequence ID" value="BAH45012.1"/>
    <property type="molecule type" value="Genomic_DNA"/>
</dbReference>
<dbReference type="SMR" id="C0ZGV3"/>
<dbReference type="STRING" id="358681.BBR47_40350"/>
<dbReference type="KEGG" id="bbe:BBR47_40350"/>
<dbReference type="eggNOG" id="COG0496">
    <property type="taxonomic scope" value="Bacteria"/>
</dbReference>
<dbReference type="HOGENOM" id="CLU_045192_1_0_9"/>
<dbReference type="Proteomes" id="UP000001877">
    <property type="component" value="Chromosome"/>
</dbReference>
<dbReference type="GO" id="GO:0005737">
    <property type="term" value="C:cytoplasm"/>
    <property type="evidence" value="ECO:0007669"/>
    <property type="project" value="UniProtKB-SubCell"/>
</dbReference>
<dbReference type="GO" id="GO:0008253">
    <property type="term" value="F:5'-nucleotidase activity"/>
    <property type="evidence" value="ECO:0007669"/>
    <property type="project" value="UniProtKB-UniRule"/>
</dbReference>
<dbReference type="GO" id="GO:0046872">
    <property type="term" value="F:metal ion binding"/>
    <property type="evidence" value="ECO:0007669"/>
    <property type="project" value="UniProtKB-UniRule"/>
</dbReference>
<dbReference type="GO" id="GO:0000166">
    <property type="term" value="F:nucleotide binding"/>
    <property type="evidence" value="ECO:0007669"/>
    <property type="project" value="UniProtKB-KW"/>
</dbReference>
<dbReference type="Gene3D" id="3.40.1210.10">
    <property type="entry name" value="Survival protein SurE-like phosphatase/nucleotidase"/>
    <property type="match status" value="1"/>
</dbReference>
<dbReference type="HAMAP" id="MF_00060">
    <property type="entry name" value="SurE"/>
    <property type="match status" value="1"/>
</dbReference>
<dbReference type="InterPro" id="IPR030048">
    <property type="entry name" value="SurE"/>
</dbReference>
<dbReference type="InterPro" id="IPR002828">
    <property type="entry name" value="SurE-like_Pase/nucleotidase"/>
</dbReference>
<dbReference type="InterPro" id="IPR036523">
    <property type="entry name" value="SurE-like_sf"/>
</dbReference>
<dbReference type="NCBIfam" id="TIGR00087">
    <property type="entry name" value="surE"/>
    <property type="match status" value="1"/>
</dbReference>
<dbReference type="PANTHER" id="PTHR30457">
    <property type="entry name" value="5'-NUCLEOTIDASE SURE"/>
    <property type="match status" value="1"/>
</dbReference>
<dbReference type="PANTHER" id="PTHR30457:SF0">
    <property type="entry name" value="PHOSPHATASE, PUTATIVE (AFU_ORTHOLOGUE AFUA_4G01070)-RELATED"/>
    <property type="match status" value="1"/>
</dbReference>
<dbReference type="Pfam" id="PF01975">
    <property type="entry name" value="SurE"/>
    <property type="match status" value="1"/>
</dbReference>
<dbReference type="SUPFAM" id="SSF64167">
    <property type="entry name" value="SurE-like"/>
    <property type="match status" value="1"/>
</dbReference>
<proteinExistence type="inferred from homology"/>